<sequence>MIRAIEGIITKKEPAFVVLKTAGGVSYGLFISLFCSAKLSKGEKVELNTTQIIREDANLLYGFLDTNEQKMFEMLIKLNGIGASTAMAICSSLSPNAFSNAVINGDADTFKSVPGIGPKTARRIIAELSDAKLISDESVPGYQNEALLALEALGFKREKIVKILPDLKSTSTSELVKEALKKLA</sequence>
<gene>
    <name evidence="1" type="primary">ruvA</name>
    <name type="ordered locus">Ccur92_09100</name>
    <name type="ORF">CCV52592_1151</name>
</gene>
<reference key="1">
    <citation type="submission" date="2007-07" db="EMBL/GenBank/DDBJ databases">
        <title>Genome sequence of Campylobacter curvus 525.92 isolated from human feces.</title>
        <authorList>
            <person name="Fouts D.E."/>
            <person name="Mongodin E.F."/>
            <person name="Puiu D."/>
            <person name="Sebastian Y."/>
            <person name="Miller W.G."/>
            <person name="Mandrell R.E."/>
            <person name="Lastovica A.J."/>
            <person name="Nelson K.E."/>
        </authorList>
    </citation>
    <scope>NUCLEOTIDE SEQUENCE [LARGE SCALE GENOMIC DNA]</scope>
    <source>
        <strain>525.92</strain>
    </source>
</reference>
<evidence type="ECO:0000255" key="1">
    <source>
        <dbReference type="HAMAP-Rule" id="MF_00031"/>
    </source>
</evidence>
<accession>A7GYC2</accession>
<keyword id="KW-0963">Cytoplasm</keyword>
<keyword id="KW-0227">DNA damage</keyword>
<keyword id="KW-0233">DNA recombination</keyword>
<keyword id="KW-0234">DNA repair</keyword>
<keyword id="KW-0238">DNA-binding</keyword>
<keyword id="KW-1185">Reference proteome</keyword>
<feature type="chain" id="PRO_1000002421" description="Holliday junction branch migration complex subunit RuvA">
    <location>
        <begin position="1"/>
        <end position="184"/>
    </location>
</feature>
<feature type="region of interest" description="Domain I" evidence="1">
    <location>
        <begin position="1"/>
        <end position="64"/>
    </location>
</feature>
<feature type="region of interest" description="Domain II" evidence="1">
    <location>
        <begin position="65"/>
        <end position="144"/>
    </location>
</feature>
<feature type="region of interest" description="Domain III" evidence="1">
    <location>
        <begin position="144"/>
        <end position="184"/>
    </location>
</feature>
<feature type="region of interest" description="Flexible linker" evidence="1">
    <location>
        <position position="144"/>
    </location>
</feature>
<proteinExistence type="inferred from homology"/>
<protein>
    <recommendedName>
        <fullName evidence="1">Holliday junction branch migration complex subunit RuvA</fullName>
    </recommendedName>
</protein>
<comment type="function">
    <text evidence="1">The RuvA-RuvB-RuvC complex processes Holliday junction (HJ) DNA during genetic recombination and DNA repair, while the RuvA-RuvB complex plays an important role in the rescue of blocked DNA replication forks via replication fork reversal (RFR). RuvA specifically binds to HJ cruciform DNA, conferring on it an open structure. The RuvB hexamer acts as an ATP-dependent pump, pulling dsDNA into and through the RuvAB complex. HJ branch migration allows RuvC to scan DNA until it finds its consensus sequence, where it cleaves and resolves the cruciform DNA.</text>
</comment>
<comment type="subunit">
    <text evidence="1">Homotetramer. Forms an RuvA(8)-RuvB(12)-Holliday junction (HJ) complex. HJ DNA is sandwiched between 2 RuvA tetramers; dsDNA enters through RuvA and exits via RuvB. An RuvB hexamer assembles on each DNA strand where it exits the tetramer. Each RuvB hexamer is contacted by two RuvA subunits (via domain III) on 2 adjacent RuvB subunits; this complex drives branch migration. In the full resolvosome a probable DNA-RuvA(4)-RuvB(12)-RuvC(2) complex forms which resolves the HJ.</text>
</comment>
<comment type="subcellular location">
    <subcellularLocation>
        <location evidence="1">Cytoplasm</location>
    </subcellularLocation>
</comment>
<comment type="domain">
    <text evidence="1">Has three domains with a flexible linker between the domains II and III and assumes an 'L' shape. Domain III is highly mobile and contacts RuvB.</text>
</comment>
<comment type="similarity">
    <text evidence="1">Belongs to the RuvA family.</text>
</comment>
<organism>
    <name type="scientific">Campylobacter curvus (strain 525.92)</name>
    <dbReference type="NCBI Taxonomy" id="360105"/>
    <lineage>
        <taxon>Bacteria</taxon>
        <taxon>Pseudomonadati</taxon>
        <taxon>Campylobacterota</taxon>
        <taxon>Epsilonproteobacteria</taxon>
        <taxon>Campylobacterales</taxon>
        <taxon>Campylobacteraceae</taxon>
        <taxon>Campylobacter</taxon>
    </lineage>
</organism>
<dbReference type="EMBL" id="CP000767">
    <property type="protein sequence ID" value="EAT99806.1"/>
    <property type="molecule type" value="Genomic_DNA"/>
</dbReference>
<dbReference type="RefSeq" id="WP_009650427.1">
    <property type="nucleotide sequence ID" value="NC_009715.2"/>
</dbReference>
<dbReference type="SMR" id="A7GYC2"/>
<dbReference type="STRING" id="360105.CCV52592_1151"/>
<dbReference type="KEGG" id="ccv:CCV52592_1151"/>
<dbReference type="HOGENOM" id="CLU_087936_3_1_7"/>
<dbReference type="OrthoDB" id="5293449at2"/>
<dbReference type="Proteomes" id="UP000006380">
    <property type="component" value="Chromosome"/>
</dbReference>
<dbReference type="GO" id="GO:0005737">
    <property type="term" value="C:cytoplasm"/>
    <property type="evidence" value="ECO:0007669"/>
    <property type="project" value="UniProtKB-SubCell"/>
</dbReference>
<dbReference type="GO" id="GO:0009379">
    <property type="term" value="C:Holliday junction helicase complex"/>
    <property type="evidence" value="ECO:0007669"/>
    <property type="project" value="InterPro"/>
</dbReference>
<dbReference type="GO" id="GO:0048476">
    <property type="term" value="C:Holliday junction resolvase complex"/>
    <property type="evidence" value="ECO:0007669"/>
    <property type="project" value="UniProtKB-UniRule"/>
</dbReference>
<dbReference type="GO" id="GO:0005524">
    <property type="term" value="F:ATP binding"/>
    <property type="evidence" value="ECO:0007669"/>
    <property type="project" value="InterPro"/>
</dbReference>
<dbReference type="GO" id="GO:0000400">
    <property type="term" value="F:four-way junction DNA binding"/>
    <property type="evidence" value="ECO:0007669"/>
    <property type="project" value="UniProtKB-UniRule"/>
</dbReference>
<dbReference type="GO" id="GO:0009378">
    <property type="term" value="F:four-way junction helicase activity"/>
    <property type="evidence" value="ECO:0007669"/>
    <property type="project" value="InterPro"/>
</dbReference>
<dbReference type="GO" id="GO:0006310">
    <property type="term" value="P:DNA recombination"/>
    <property type="evidence" value="ECO:0007669"/>
    <property type="project" value="UniProtKB-UniRule"/>
</dbReference>
<dbReference type="GO" id="GO:0006281">
    <property type="term" value="P:DNA repair"/>
    <property type="evidence" value="ECO:0007669"/>
    <property type="project" value="UniProtKB-UniRule"/>
</dbReference>
<dbReference type="CDD" id="cd14332">
    <property type="entry name" value="UBA_RuvA_C"/>
    <property type="match status" value="1"/>
</dbReference>
<dbReference type="Gene3D" id="1.10.150.20">
    <property type="entry name" value="5' to 3' exonuclease, C-terminal subdomain"/>
    <property type="match status" value="1"/>
</dbReference>
<dbReference type="Gene3D" id="1.10.8.10">
    <property type="entry name" value="DNA helicase RuvA subunit, C-terminal domain"/>
    <property type="match status" value="1"/>
</dbReference>
<dbReference type="Gene3D" id="2.40.50.140">
    <property type="entry name" value="Nucleic acid-binding proteins"/>
    <property type="match status" value="1"/>
</dbReference>
<dbReference type="HAMAP" id="MF_00031">
    <property type="entry name" value="DNA_HJ_migration_RuvA"/>
    <property type="match status" value="1"/>
</dbReference>
<dbReference type="InterPro" id="IPR013849">
    <property type="entry name" value="DNA_helicase_Holl-junc_RuvA_I"/>
</dbReference>
<dbReference type="InterPro" id="IPR003583">
    <property type="entry name" value="Hlx-hairpin-Hlx_DNA-bd_motif"/>
</dbReference>
<dbReference type="InterPro" id="IPR012340">
    <property type="entry name" value="NA-bd_OB-fold"/>
</dbReference>
<dbReference type="InterPro" id="IPR000085">
    <property type="entry name" value="RuvA"/>
</dbReference>
<dbReference type="InterPro" id="IPR010994">
    <property type="entry name" value="RuvA_2-like"/>
</dbReference>
<dbReference type="InterPro" id="IPR011114">
    <property type="entry name" value="RuvA_C"/>
</dbReference>
<dbReference type="InterPro" id="IPR036267">
    <property type="entry name" value="RuvA_C_sf"/>
</dbReference>
<dbReference type="NCBIfam" id="TIGR00084">
    <property type="entry name" value="ruvA"/>
    <property type="match status" value="1"/>
</dbReference>
<dbReference type="Pfam" id="PF14520">
    <property type="entry name" value="HHH_5"/>
    <property type="match status" value="1"/>
</dbReference>
<dbReference type="Pfam" id="PF07499">
    <property type="entry name" value="RuvA_C"/>
    <property type="match status" value="1"/>
</dbReference>
<dbReference type="Pfam" id="PF01330">
    <property type="entry name" value="RuvA_N"/>
    <property type="match status" value="1"/>
</dbReference>
<dbReference type="SMART" id="SM00278">
    <property type="entry name" value="HhH1"/>
    <property type="match status" value="2"/>
</dbReference>
<dbReference type="SUPFAM" id="SSF46929">
    <property type="entry name" value="DNA helicase RuvA subunit, C-terminal domain"/>
    <property type="match status" value="1"/>
</dbReference>
<dbReference type="SUPFAM" id="SSF50249">
    <property type="entry name" value="Nucleic acid-binding proteins"/>
    <property type="match status" value="1"/>
</dbReference>
<dbReference type="SUPFAM" id="SSF47781">
    <property type="entry name" value="RuvA domain 2-like"/>
    <property type="match status" value="1"/>
</dbReference>
<name>RUVA_CAMC5</name>